<name>YAML_STRVL</name>
<feature type="chain" id="PRO_0000108011" description="Uncharacterized HTH-type transcriptional regulator in aml 5'region">
    <location>
        <begin position="1" status="less than"/>
        <end position="77"/>
    </location>
</feature>
<feature type="non-terminal residue">
    <location>
        <position position="1"/>
    </location>
</feature>
<reference key="1">
    <citation type="journal article" date="1988" name="Gene">
        <title>Cloning, characterisation and regulation of an alpha-amylase gene from Streptomyces venezuelae.</title>
        <authorList>
            <person name="Virolle M.-J."/>
            <person name="Long C.M."/>
            <person name="Chang S."/>
            <person name="Bibb M.J."/>
        </authorList>
    </citation>
    <scope>NUCLEOTIDE SEQUENCE [GENOMIC DNA]</scope>
    <source>
        <strain>ATCC 15068 / DSM 41111 / IMRU 3629</strain>
    </source>
</reference>
<proteinExistence type="predicted"/>
<protein>
    <recommendedName>
        <fullName>Uncharacterized HTH-type transcriptional regulator in aml 5'region</fullName>
    </recommendedName>
</protein>
<sequence length="77" mass="8063">GDVSVVGFDDSPLIAFTSPPLSTVRQPVQAMATAAVGALLEEIEGNPVQRTEFVFQPELVVRGSTAQPPGRVSQVLS</sequence>
<dbReference type="EMBL" id="M25263">
    <property type="protein sequence ID" value="AAB36560.1"/>
    <property type="molecule type" value="Genomic_DNA"/>
</dbReference>
<dbReference type="PIR" id="A28391">
    <property type="entry name" value="A28391"/>
</dbReference>
<dbReference type="PIR" id="PS0022">
    <property type="entry name" value="PS0022"/>
</dbReference>
<dbReference type="SMR" id="P23822"/>
<dbReference type="GO" id="GO:0003700">
    <property type="term" value="F:DNA-binding transcription factor activity"/>
    <property type="evidence" value="ECO:0007669"/>
    <property type="project" value="TreeGrafter"/>
</dbReference>
<dbReference type="GO" id="GO:0000976">
    <property type="term" value="F:transcription cis-regulatory region binding"/>
    <property type="evidence" value="ECO:0007669"/>
    <property type="project" value="TreeGrafter"/>
</dbReference>
<dbReference type="Gene3D" id="3.40.50.2300">
    <property type="match status" value="1"/>
</dbReference>
<dbReference type="InterPro" id="IPR046335">
    <property type="entry name" value="LacI/GalR-like_sensor"/>
</dbReference>
<dbReference type="InterPro" id="IPR028082">
    <property type="entry name" value="Peripla_BP_I"/>
</dbReference>
<dbReference type="PANTHER" id="PTHR30146">
    <property type="entry name" value="LACI-RELATED TRANSCRIPTIONAL REPRESSOR"/>
    <property type="match status" value="1"/>
</dbReference>
<dbReference type="PANTHER" id="PTHR30146:SF153">
    <property type="entry name" value="LACTOSE OPERON REPRESSOR"/>
    <property type="match status" value="1"/>
</dbReference>
<dbReference type="Pfam" id="PF13377">
    <property type="entry name" value="Peripla_BP_3"/>
    <property type="match status" value="1"/>
</dbReference>
<dbReference type="SUPFAM" id="SSF53822">
    <property type="entry name" value="Periplasmic binding protein-like I"/>
    <property type="match status" value="1"/>
</dbReference>
<comment type="function">
    <text>Putative sugar-binding regulatory protein for the alpha-amylase gene.</text>
</comment>
<keyword id="KW-0238">DNA-binding</keyword>
<keyword id="KW-0804">Transcription</keyword>
<keyword id="KW-0805">Transcription regulation</keyword>
<organism>
    <name type="scientific">Streptomyces violaceus</name>
    <name type="common">Streptomyces venezuelae</name>
    <dbReference type="NCBI Taxonomy" id="1936"/>
    <lineage>
        <taxon>Bacteria</taxon>
        <taxon>Bacillati</taxon>
        <taxon>Actinomycetota</taxon>
        <taxon>Actinomycetes</taxon>
        <taxon>Kitasatosporales</taxon>
        <taxon>Streptomycetaceae</taxon>
        <taxon>Streptomyces</taxon>
    </lineage>
</organism>
<accession>P23822</accession>